<sequence length="127" mass="14279">MNCYETLFVVKPTLTEEETAAEIAKIKDVLAKVDAELLATDDMGMRKLAYPVQKNDRGYYTVLFYKANGEAIAEIERNLKINEEVIKFLTVKYVKNKEIAQFDKLVAAANKSKDAEPAEPKAETTEA</sequence>
<keyword id="KW-0687">Ribonucleoprotein</keyword>
<keyword id="KW-0689">Ribosomal protein</keyword>
<keyword id="KW-0694">RNA-binding</keyword>
<keyword id="KW-0699">rRNA-binding</keyword>
<proteinExistence type="inferred from homology"/>
<comment type="function">
    <text evidence="1">Binds together with bS18 to 16S ribosomal RNA.</text>
</comment>
<comment type="similarity">
    <text evidence="1">Belongs to the bacterial ribosomal protein bS6 family.</text>
</comment>
<accession>A6Q7C9</accession>
<organism>
    <name type="scientific">Sulfurovum sp. (strain NBC37-1)</name>
    <dbReference type="NCBI Taxonomy" id="387093"/>
    <lineage>
        <taxon>Bacteria</taxon>
        <taxon>Pseudomonadati</taxon>
        <taxon>Campylobacterota</taxon>
        <taxon>Epsilonproteobacteria</taxon>
        <taxon>Campylobacterales</taxon>
        <taxon>Sulfurovaceae</taxon>
        <taxon>Sulfurovum</taxon>
    </lineage>
</organism>
<gene>
    <name evidence="1" type="primary">rpsF</name>
    <name type="ordered locus">SUN_0428</name>
</gene>
<reference key="1">
    <citation type="journal article" date="2007" name="Proc. Natl. Acad. Sci. U.S.A.">
        <title>Deep-sea vent epsilon-proteobacterial genomes provide insights into emergence of pathogens.</title>
        <authorList>
            <person name="Nakagawa S."/>
            <person name="Takaki Y."/>
            <person name="Shimamura S."/>
            <person name="Reysenbach A.-L."/>
            <person name="Takai K."/>
            <person name="Horikoshi K."/>
        </authorList>
    </citation>
    <scope>NUCLEOTIDE SEQUENCE [LARGE SCALE GENOMIC DNA]</scope>
    <source>
        <strain>NBC37-1</strain>
    </source>
</reference>
<evidence type="ECO:0000255" key="1">
    <source>
        <dbReference type="HAMAP-Rule" id="MF_00360"/>
    </source>
</evidence>
<evidence type="ECO:0000305" key="2"/>
<name>RS6_SULNB</name>
<dbReference type="EMBL" id="AP009179">
    <property type="protein sequence ID" value="BAF71388.1"/>
    <property type="molecule type" value="Genomic_DNA"/>
</dbReference>
<dbReference type="RefSeq" id="WP_011980121.1">
    <property type="nucleotide sequence ID" value="NC_009663.1"/>
</dbReference>
<dbReference type="SMR" id="A6Q7C9"/>
<dbReference type="STRING" id="387093.SUN_0428"/>
<dbReference type="KEGG" id="sun:SUN_0428"/>
<dbReference type="eggNOG" id="COG0360">
    <property type="taxonomic scope" value="Bacteria"/>
</dbReference>
<dbReference type="HOGENOM" id="CLU_113441_4_1_7"/>
<dbReference type="OrthoDB" id="9812702at2"/>
<dbReference type="Proteomes" id="UP000006378">
    <property type="component" value="Chromosome"/>
</dbReference>
<dbReference type="GO" id="GO:0005737">
    <property type="term" value="C:cytoplasm"/>
    <property type="evidence" value="ECO:0007669"/>
    <property type="project" value="UniProtKB-ARBA"/>
</dbReference>
<dbReference type="GO" id="GO:1990904">
    <property type="term" value="C:ribonucleoprotein complex"/>
    <property type="evidence" value="ECO:0007669"/>
    <property type="project" value="UniProtKB-KW"/>
</dbReference>
<dbReference type="GO" id="GO:0005840">
    <property type="term" value="C:ribosome"/>
    <property type="evidence" value="ECO:0007669"/>
    <property type="project" value="UniProtKB-KW"/>
</dbReference>
<dbReference type="GO" id="GO:0070181">
    <property type="term" value="F:small ribosomal subunit rRNA binding"/>
    <property type="evidence" value="ECO:0007669"/>
    <property type="project" value="TreeGrafter"/>
</dbReference>
<dbReference type="GO" id="GO:0003735">
    <property type="term" value="F:structural constituent of ribosome"/>
    <property type="evidence" value="ECO:0007669"/>
    <property type="project" value="InterPro"/>
</dbReference>
<dbReference type="GO" id="GO:0006412">
    <property type="term" value="P:translation"/>
    <property type="evidence" value="ECO:0007669"/>
    <property type="project" value="UniProtKB-UniRule"/>
</dbReference>
<dbReference type="CDD" id="cd00473">
    <property type="entry name" value="bS6"/>
    <property type="match status" value="1"/>
</dbReference>
<dbReference type="Gene3D" id="3.30.70.60">
    <property type="match status" value="1"/>
</dbReference>
<dbReference type="HAMAP" id="MF_00360">
    <property type="entry name" value="Ribosomal_bS6"/>
    <property type="match status" value="1"/>
</dbReference>
<dbReference type="InterPro" id="IPR000529">
    <property type="entry name" value="Ribosomal_bS6"/>
</dbReference>
<dbReference type="InterPro" id="IPR035980">
    <property type="entry name" value="Ribosomal_bS6_sf"/>
</dbReference>
<dbReference type="InterPro" id="IPR020814">
    <property type="entry name" value="Ribosomal_S6_plastid/chlpt"/>
</dbReference>
<dbReference type="InterPro" id="IPR014717">
    <property type="entry name" value="Transl_elong_EF1B/ribsomal_bS6"/>
</dbReference>
<dbReference type="NCBIfam" id="TIGR00166">
    <property type="entry name" value="S6"/>
    <property type="match status" value="1"/>
</dbReference>
<dbReference type="PANTHER" id="PTHR21011">
    <property type="entry name" value="MITOCHONDRIAL 28S RIBOSOMAL PROTEIN S6"/>
    <property type="match status" value="1"/>
</dbReference>
<dbReference type="PANTHER" id="PTHR21011:SF1">
    <property type="entry name" value="SMALL RIBOSOMAL SUBUNIT PROTEIN BS6M"/>
    <property type="match status" value="1"/>
</dbReference>
<dbReference type="Pfam" id="PF01250">
    <property type="entry name" value="Ribosomal_S6"/>
    <property type="match status" value="1"/>
</dbReference>
<dbReference type="SUPFAM" id="SSF54995">
    <property type="entry name" value="Ribosomal protein S6"/>
    <property type="match status" value="1"/>
</dbReference>
<feature type="chain" id="PRO_1000005371" description="Small ribosomal subunit protein bS6">
    <location>
        <begin position="1"/>
        <end position="127"/>
    </location>
</feature>
<protein>
    <recommendedName>
        <fullName evidence="1">Small ribosomal subunit protein bS6</fullName>
    </recommendedName>
    <alternativeName>
        <fullName evidence="2">30S ribosomal protein S6</fullName>
    </alternativeName>
</protein>